<comment type="catalytic activity">
    <reaction evidence="1">
        <text>2-formamido-N(1)-(5-O-phospho-beta-D-ribosyl)acetamidine + ATP = 5-amino-1-(5-phospho-beta-D-ribosyl)imidazole + ADP + phosphate + H(+)</text>
        <dbReference type="Rhea" id="RHEA:23032"/>
        <dbReference type="ChEBI" id="CHEBI:15378"/>
        <dbReference type="ChEBI" id="CHEBI:30616"/>
        <dbReference type="ChEBI" id="CHEBI:43474"/>
        <dbReference type="ChEBI" id="CHEBI:137981"/>
        <dbReference type="ChEBI" id="CHEBI:147287"/>
        <dbReference type="ChEBI" id="CHEBI:456216"/>
        <dbReference type="EC" id="6.3.3.1"/>
    </reaction>
</comment>
<comment type="pathway">
    <text evidence="1">Purine metabolism; IMP biosynthesis via de novo pathway; 5-amino-1-(5-phospho-D-ribosyl)imidazole from N(2)-formyl-N(1)-(5-phospho-D-ribosyl)glycinamide: step 2/2.</text>
</comment>
<comment type="subcellular location">
    <subcellularLocation>
        <location evidence="1">Cytoplasm</location>
    </subcellularLocation>
</comment>
<comment type="similarity">
    <text evidence="1">Belongs to the AIR synthase family.</text>
</comment>
<sequence length="351" mass="36913">MNPPKSAPDAQGLSYRDAGVDIDAGDALVDKIKPFAKKTLRDGVLGGIGGFGALFEVPKKYREPVLVSGTDGVGTKLKLAFHLNKHDTVGQDLVAMSVNDILVQGAEPLFFLDYFACGKLDVETAATVVKGIATGCELAGCALIGGETAEMPGMYPDGEYDLAGFAVGAVEKSKIIDGSTIAEGDVVLGLASSGIHSNGFSLVRKIIERANPDLSADFHGRSLADALMAPTRIYVKPLLALMEKIAVKGMAHITGGGLVENIPRVLRDGLTAELDQHAWPLPPLFQWLQQHGGVADAEMHRVFNCGIGMAVIVSAADADDALRQLADAGEQVWKIGTVRASREGEAQTVVV</sequence>
<organism>
    <name type="scientific">Burkholderia mallei (strain NCTC 10229)</name>
    <dbReference type="NCBI Taxonomy" id="412022"/>
    <lineage>
        <taxon>Bacteria</taxon>
        <taxon>Pseudomonadati</taxon>
        <taxon>Pseudomonadota</taxon>
        <taxon>Betaproteobacteria</taxon>
        <taxon>Burkholderiales</taxon>
        <taxon>Burkholderiaceae</taxon>
        <taxon>Burkholderia</taxon>
        <taxon>pseudomallei group</taxon>
    </lineage>
</organism>
<dbReference type="EC" id="6.3.3.1" evidence="1"/>
<dbReference type="EMBL" id="CP000546">
    <property type="protein sequence ID" value="ABN03748.1"/>
    <property type="molecule type" value="Genomic_DNA"/>
</dbReference>
<dbReference type="RefSeq" id="WP_004194386.1">
    <property type="nucleotide sequence ID" value="NC_008836.1"/>
</dbReference>
<dbReference type="SMR" id="A2S554"/>
<dbReference type="GeneID" id="93061406"/>
<dbReference type="KEGG" id="bml:BMA10229_A1088"/>
<dbReference type="HOGENOM" id="CLU_047116_0_0_4"/>
<dbReference type="UniPathway" id="UPA00074">
    <property type="reaction ID" value="UER00129"/>
</dbReference>
<dbReference type="Proteomes" id="UP000002283">
    <property type="component" value="Chromosome I"/>
</dbReference>
<dbReference type="GO" id="GO:0005829">
    <property type="term" value="C:cytosol"/>
    <property type="evidence" value="ECO:0007669"/>
    <property type="project" value="TreeGrafter"/>
</dbReference>
<dbReference type="GO" id="GO:0005524">
    <property type="term" value="F:ATP binding"/>
    <property type="evidence" value="ECO:0007669"/>
    <property type="project" value="UniProtKB-KW"/>
</dbReference>
<dbReference type="GO" id="GO:0004637">
    <property type="term" value="F:phosphoribosylamine-glycine ligase activity"/>
    <property type="evidence" value="ECO:0007669"/>
    <property type="project" value="TreeGrafter"/>
</dbReference>
<dbReference type="GO" id="GO:0004641">
    <property type="term" value="F:phosphoribosylformylglycinamidine cyclo-ligase activity"/>
    <property type="evidence" value="ECO:0007669"/>
    <property type="project" value="UniProtKB-UniRule"/>
</dbReference>
<dbReference type="GO" id="GO:0006189">
    <property type="term" value="P:'de novo' IMP biosynthetic process"/>
    <property type="evidence" value="ECO:0007669"/>
    <property type="project" value="UniProtKB-UniRule"/>
</dbReference>
<dbReference type="GO" id="GO:0046084">
    <property type="term" value="P:adenine biosynthetic process"/>
    <property type="evidence" value="ECO:0007669"/>
    <property type="project" value="TreeGrafter"/>
</dbReference>
<dbReference type="CDD" id="cd02196">
    <property type="entry name" value="PurM"/>
    <property type="match status" value="1"/>
</dbReference>
<dbReference type="FunFam" id="3.30.1330.10:FF:000001">
    <property type="entry name" value="Phosphoribosylformylglycinamidine cyclo-ligase"/>
    <property type="match status" value="1"/>
</dbReference>
<dbReference type="FunFam" id="3.90.650.10:FF:000001">
    <property type="entry name" value="Phosphoribosylformylglycinamidine cyclo-ligase"/>
    <property type="match status" value="1"/>
</dbReference>
<dbReference type="Gene3D" id="3.90.650.10">
    <property type="entry name" value="PurM-like C-terminal domain"/>
    <property type="match status" value="1"/>
</dbReference>
<dbReference type="Gene3D" id="3.30.1330.10">
    <property type="entry name" value="PurM-like, N-terminal domain"/>
    <property type="match status" value="1"/>
</dbReference>
<dbReference type="HAMAP" id="MF_00741">
    <property type="entry name" value="AIRS"/>
    <property type="match status" value="1"/>
</dbReference>
<dbReference type="InterPro" id="IPR010918">
    <property type="entry name" value="PurM-like_C_dom"/>
</dbReference>
<dbReference type="InterPro" id="IPR036676">
    <property type="entry name" value="PurM-like_C_sf"/>
</dbReference>
<dbReference type="InterPro" id="IPR016188">
    <property type="entry name" value="PurM-like_N"/>
</dbReference>
<dbReference type="InterPro" id="IPR036921">
    <property type="entry name" value="PurM-like_N_sf"/>
</dbReference>
<dbReference type="InterPro" id="IPR004733">
    <property type="entry name" value="PurM_cligase"/>
</dbReference>
<dbReference type="NCBIfam" id="TIGR00878">
    <property type="entry name" value="purM"/>
    <property type="match status" value="1"/>
</dbReference>
<dbReference type="PANTHER" id="PTHR10520:SF12">
    <property type="entry name" value="TRIFUNCTIONAL PURINE BIOSYNTHETIC PROTEIN ADENOSINE-3"/>
    <property type="match status" value="1"/>
</dbReference>
<dbReference type="PANTHER" id="PTHR10520">
    <property type="entry name" value="TRIFUNCTIONAL PURINE BIOSYNTHETIC PROTEIN ADENOSINE-3-RELATED"/>
    <property type="match status" value="1"/>
</dbReference>
<dbReference type="Pfam" id="PF00586">
    <property type="entry name" value="AIRS"/>
    <property type="match status" value="1"/>
</dbReference>
<dbReference type="Pfam" id="PF02769">
    <property type="entry name" value="AIRS_C"/>
    <property type="match status" value="1"/>
</dbReference>
<dbReference type="SUPFAM" id="SSF56042">
    <property type="entry name" value="PurM C-terminal domain-like"/>
    <property type="match status" value="1"/>
</dbReference>
<dbReference type="SUPFAM" id="SSF55326">
    <property type="entry name" value="PurM N-terminal domain-like"/>
    <property type="match status" value="1"/>
</dbReference>
<evidence type="ECO:0000255" key="1">
    <source>
        <dbReference type="HAMAP-Rule" id="MF_00741"/>
    </source>
</evidence>
<reference key="1">
    <citation type="journal article" date="2010" name="Genome Biol. Evol.">
        <title>Continuing evolution of Burkholderia mallei through genome reduction and large-scale rearrangements.</title>
        <authorList>
            <person name="Losada L."/>
            <person name="Ronning C.M."/>
            <person name="DeShazer D."/>
            <person name="Woods D."/>
            <person name="Fedorova N."/>
            <person name="Kim H.S."/>
            <person name="Shabalina S.A."/>
            <person name="Pearson T.R."/>
            <person name="Brinkac L."/>
            <person name="Tan P."/>
            <person name="Nandi T."/>
            <person name="Crabtree J."/>
            <person name="Badger J."/>
            <person name="Beckstrom-Sternberg S."/>
            <person name="Saqib M."/>
            <person name="Schutzer S.E."/>
            <person name="Keim P."/>
            <person name="Nierman W.C."/>
        </authorList>
    </citation>
    <scope>NUCLEOTIDE SEQUENCE [LARGE SCALE GENOMIC DNA]</scope>
    <source>
        <strain>NCTC 10229</strain>
    </source>
</reference>
<gene>
    <name evidence="1" type="primary">purM</name>
    <name type="ordered locus">BMA10229_A1088</name>
</gene>
<feature type="chain" id="PRO_1000046427" description="Phosphoribosylformylglycinamidine cyclo-ligase">
    <location>
        <begin position="1"/>
        <end position="351"/>
    </location>
</feature>
<keyword id="KW-0067">ATP-binding</keyword>
<keyword id="KW-0963">Cytoplasm</keyword>
<keyword id="KW-0436">Ligase</keyword>
<keyword id="KW-0547">Nucleotide-binding</keyword>
<keyword id="KW-0658">Purine biosynthesis</keyword>
<proteinExistence type="inferred from homology"/>
<accession>A2S554</accession>
<name>PUR5_BURM9</name>
<protein>
    <recommendedName>
        <fullName evidence="1">Phosphoribosylformylglycinamidine cyclo-ligase</fullName>
        <ecNumber evidence="1">6.3.3.1</ecNumber>
    </recommendedName>
    <alternativeName>
        <fullName evidence="1">AIR synthase</fullName>
    </alternativeName>
    <alternativeName>
        <fullName evidence="1">AIRS</fullName>
    </alternativeName>
    <alternativeName>
        <fullName evidence="1">Phosphoribosyl-aminoimidazole synthetase</fullName>
    </alternativeName>
</protein>